<name>UCHL1_HUMAN</name>
<reference key="1">
    <citation type="journal article" date="2005" name="Nature">
        <title>Generation and annotation of the DNA sequences of human chromosomes 2 and 4.</title>
        <authorList>
            <person name="Hillier L.W."/>
            <person name="Graves T.A."/>
            <person name="Fulton R.S."/>
            <person name="Fulton L.A."/>
            <person name="Pepin K.H."/>
            <person name="Minx P."/>
            <person name="Wagner-McPherson C."/>
            <person name="Layman D."/>
            <person name="Wylie K."/>
            <person name="Sekhon M."/>
            <person name="Becker M.C."/>
            <person name="Fewell G.A."/>
            <person name="Delehaunty K.D."/>
            <person name="Miner T.L."/>
            <person name="Nash W.E."/>
            <person name="Kremitzki C."/>
            <person name="Oddy L."/>
            <person name="Du H."/>
            <person name="Sun H."/>
            <person name="Bradshaw-Cordum H."/>
            <person name="Ali J."/>
            <person name="Carter J."/>
            <person name="Cordes M."/>
            <person name="Harris A."/>
            <person name="Isak A."/>
            <person name="van Brunt A."/>
            <person name="Nguyen C."/>
            <person name="Du F."/>
            <person name="Courtney L."/>
            <person name="Kalicki J."/>
            <person name="Ozersky P."/>
            <person name="Abbott S."/>
            <person name="Armstrong J."/>
            <person name="Belter E.A."/>
            <person name="Caruso L."/>
            <person name="Cedroni M."/>
            <person name="Cotton M."/>
            <person name="Davidson T."/>
            <person name="Desai A."/>
            <person name="Elliott G."/>
            <person name="Erb T."/>
            <person name="Fronick C."/>
            <person name="Gaige T."/>
            <person name="Haakenson W."/>
            <person name="Haglund K."/>
            <person name="Holmes A."/>
            <person name="Harkins R."/>
            <person name="Kim K."/>
            <person name="Kruchowski S.S."/>
            <person name="Strong C.M."/>
            <person name="Grewal N."/>
            <person name="Goyea E."/>
            <person name="Hou S."/>
            <person name="Levy A."/>
            <person name="Martinka S."/>
            <person name="Mead K."/>
            <person name="McLellan M.D."/>
            <person name="Meyer R."/>
            <person name="Randall-Maher J."/>
            <person name="Tomlinson C."/>
            <person name="Dauphin-Kohlberg S."/>
            <person name="Kozlowicz-Reilly A."/>
            <person name="Shah N."/>
            <person name="Swearengen-Shahid S."/>
            <person name="Snider J."/>
            <person name="Strong J.T."/>
            <person name="Thompson J."/>
            <person name="Yoakum M."/>
            <person name="Leonard S."/>
            <person name="Pearman C."/>
            <person name="Trani L."/>
            <person name="Radionenko M."/>
            <person name="Waligorski J.E."/>
            <person name="Wang C."/>
            <person name="Rock S.M."/>
            <person name="Tin-Wollam A.-M."/>
            <person name="Maupin R."/>
            <person name="Latreille P."/>
            <person name="Wendl M.C."/>
            <person name="Yang S.-P."/>
            <person name="Pohl C."/>
            <person name="Wallis J.W."/>
            <person name="Spieth J."/>
            <person name="Bieri T.A."/>
            <person name="Berkowicz N."/>
            <person name="Nelson J.O."/>
            <person name="Osborne J."/>
            <person name="Ding L."/>
            <person name="Meyer R."/>
            <person name="Sabo A."/>
            <person name="Shotland Y."/>
            <person name="Sinha P."/>
            <person name="Wohldmann P.E."/>
            <person name="Cook L.L."/>
            <person name="Hickenbotham M.T."/>
            <person name="Eldred J."/>
            <person name="Williams D."/>
            <person name="Jones T.A."/>
            <person name="She X."/>
            <person name="Ciccarelli F.D."/>
            <person name="Izaurralde E."/>
            <person name="Taylor J."/>
            <person name="Schmutz J."/>
            <person name="Myers R.M."/>
            <person name="Cox D.R."/>
            <person name="Huang X."/>
            <person name="McPherson J.D."/>
            <person name="Mardis E.R."/>
            <person name="Clifton S.W."/>
            <person name="Warren W.C."/>
            <person name="Chinwalla A.T."/>
            <person name="Eddy S.R."/>
            <person name="Marra M.A."/>
            <person name="Ovcharenko I."/>
            <person name="Furey T.S."/>
            <person name="Miller W."/>
            <person name="Eichler E.E."/>
            <person name="Bork P."/>
            <person name="Suyama M."/>
            <person name="Torrents D."/>
            <person name="Waterston R.H."/>
            <person name="Wilson R.K."/>
        </authorList>
    </citation>
    <scope>NUCLEOTIDE SEQUENCE [LARGE SCALE GENOMIC DNA]</scope>
</reference>
<reference key="2">
    <citation type="submission" date="2005-07" db="EMBL/GenBank/DDBJ databases">
        <authorList>
            <person name="Mural R.J."/>
            <person name="Istrail S."/>
            <person name="Sutton G.G."/>
            <person name="Florea L."/>
            <person name="Halpern A.L."/>
            <person name="Mobarry C.M."/>
            <person name="Lippert R."/>
            <person name="Walenz B."/>
            <person name="Shatkay H."/>
            <person name="Dew I."/>
            <person name="Miller J.R."/>
            <person name="Flanigan M.J."/>
            <person name="Edwards N.J."/>
            <person name="Bolanos R."/>
            <person name="Fasulo D."/>
            <person name="Halldorsson B.V."/>
            <person name="Hannenhalli S."/>
            <person name="Turner R."/>
            <person name="Yooseph S."/>
            <person name="Lu F."/>
            <person name="Nusskern D.R."/>
            <person name="Shue B.C."/>
            <person name="Zheng X.H."/>
            <person name="Zhong F."/>
            <person name="Delcher A.L."/>
            <person name="Huson D.H."/>
            <person name="Kravitz S.A."/>
            <person name="Mouchard L."/>
            <person name="Reinert K."/>
            <person name="Remington K.A."/>
            <person name="Clark A.G."/>
            <person name="Waterman M.S."/>
            <person name="Eichler E.E."/>
            <person name="Adams M.D."/>
            <person name="Hunkapiller M.W."/>
            <person name="Myers E.W."/>
            <person name="Venter J.C."/>
        </authorList>
    </citation>
    <scope>NUCLEOTIDE SEQUENCE [LARGE SCALE GENOMIC DNA]</scope>
</reference>
<reference key="3">
    <citation type="journal article" date="2004" name="Genome Res.">
        <title>The status, quality, and expansion of the NIH full-length cDNA project: the Mammalian Gene Collection (MGC).</title>
        <authorList>
            <consortium name="The MGC Project Team"/>
        </authorList>
    </citation>
    <scope>NUCLEOTIDE SEQUENCE [LARGE SCALE MRNA]</scope>
    <source>
        <tissue>Lung</tissue>
        <tissue>Muscle</tissue>
    </source>
</reference>
<reference key="4">
    <citation type="journal article" date="1990" name="Biochem. J.">
        <title>The structure of the human gene encoding protein gene product 9.5 (PGP9.5), a neuron-specific ubiquitin C-terminal hydrolase.</title>
        <authorList>
            <person name="Day I.N.M."/>
            <person name="Hinks L.J."/>
            <person name="Thompson R.J."/>
        </authorList>
    </citation>
    <scope>NUCLEOTIDE SEQUENCE [MRNA] OF 1-15</scope>
</reference>
<reference key="5">
    <citation type="journal article" date="2004" name="J. Biol. Chem.">
        <title>Oxidative modifications and down-regulation of ubiquitin carboxyl-terminal hydrolase L1 associated with idiopathic Parkinson's and Alzheimer's diseases.</title>
        <authorList>
            <person name="Choi J."/>
            <person name="Levey A.I."/>
            <person name="Weintraub S.T."/>
            <person name="Rees H.D."/>
            <person name="Gearing M."/>
            <person name="Chin L.-S."/>
            <person name="Li L."/>
        </authorList>
    </citation>
    <scope>PROTEIN SEQUENCE OF 1-15 AND 214-221</scope>
    <scope>SUSCEPTIBILITY TO OXIDATION</scope>
    <scope>IDENTIFICATION BY MASS SPECTROMETRY</scope>
    <scope>TISSUE SPECIFICITY</scope>
</reference>
<reference key="6">
    <citation type="submission" date="2008-12" db="UniProtKB">
        <authorList>
            <person name="Lubec G."/>
            <person name="Afjehi-Sadat L."/>
            <person name="Chen W.-Q."/>
            <person name="Sun Y."/>
        </authorList>
    </citation>
    <scope>PROTEIN SEQUENCE OF 1-15; 20-27; 66-78; 84-129; 136-195 AND 214-221</scope>
    <scope>IDENTIFICATION BY MASS SPECTROMETRY</scope>
    <source>
        <tissue>Brain</tissue>
        <tissue>Cajal-Retzius cell</tissue>
        <tissue>Fetal brain cortex</tissue>
    </source>
</reference>
<reference key="7">
    <citation type="journal article" date="1987" name="FEBS Lett.">
        <title>Molecular cloning of cDNA coding for human PGP 9.5 protein. A novel cytoplasmic marker for neurones and neuroendocrine cells.</title>
        <authorList>
            <person name="Day I.N.M."/>
            <person name="Thompson R.J."/>
        </authorList>
    </citation>
    <scope>NUCLEOTIDE SEQUENCE [MRNA] OF 7-223</scope>
    <scope>PARTIAL PROTEIN SEQUENCE</scope>
</reference>
<reference key="8">
    <citation type="journal article" date="1998" name="Nature">
        <title>The ubiquitin pathway in Parkinson's disease.</title>
        <authorList>
            <person name="Leroy E."/>
            <person name="Boyer R."/>
            <person name="Auburger G."/>
            <person name="Leube B."/>
            <person name="Ulm G."/>
            <person name="Mezey E."/>
            <person name="Harta G."/>
            <person name="Brownstein M.J."/>
            <person name="Jonnalagada S."/>
            <person name="Chernova T."/>
            <person name="Dehejia A."/>
            <person name="Lavedan C."/>
            <person name="Gasser T."/>
            <person name="Steinbach P.J."/>
            <person name="Wilkinson K.D."/>
            <person name="Polymeropoulos M.H."/>
        </authorList>
    </citation>
    <scope>NUCLEOTIDE SEQUENCE [GENOMIC DNA] OF 16-223</scope>
    <scope>FUNCTION</scope>
    <scope>CATALYTIC ACTIVITY</scope>
    <scope>BIOPHYSICOCHEMICAL PROPERTIES</scope>
    <scope>VARIANT PARK5 MET-93</scope>
    <scope>CHARACTERIZATION OF VARIANT PARK5 MET-93</scope>
</reference>
<reference key="9">
    <citation type="journal article" date="1991" name="FEBS Lett.">
        <title>Neuronal protein gene product 9.5 (IEF SSP 6104) is expressed in cultured human MRC-5 fibroblasts of normal origin and is strongly down-regulated in their SV40 transformed counterparts.</title>
        <authorList>
            <person name="Honore B."/>
            <person name="Rasmussen H.H."/>
            <person name="Vandekerckhove J."/>
            <person name="Celis J.E."/>
        </authorList>
    </citation>
    <scope>PROTEIN SEQUENCE OF 20-25; 79-81; 106-121 AND 134-151</scope>
</reference>
<reference key="10">
    <citation type="journal article" date="1992" name="Electrophoresis">
        <title>Microsequences of 145 proteins recorded in the two-dimensional gel protein database of normal human epidermal keratinocytes.</title>
        <authorList>
            <person name="Rasmussen H.H."/>
            <person name="van Damme J."/>
            <person name="Puype M."/>
            <person name="Gesser B."/>
            <person name="Celis J.E."/>
            <person name="Vandekerckhove J."/>
        </authorList>
    </citation>
    <scope>PROTEIN SEQUENCE OF 20-25; 79-91; 106-123 AND 136-151</scope>
</reference>
<reference key="11">
    <citation type="journal article" date="1996" name="Biochemistry">
        <title>Substrate binding and catalysis by ubiquitin C-terminal hydrolases: identification of two active site residues.</title>
        <authorList>
            <person name="Larsen C.N."/>
            <person name="Price J.S."/>
            <person name="Wilkinson K.D."/>
        </authorList>
    </citation>
    <scope>FUNCTION</scope>
    <scope>CATALYTIC ACTIVITY</scope>
    <scope>ACTIVE SITE</scope>
    <scope>MUTAGENESIS OF GLN-73; CYS-90; HIS-97; HIS-161 AND ASP-176</scope>
    <scope>BIOPHYSICOCHEMICAL PROPERTIES</scope>
</reference>
<reference key="12">
    <citation type="journal article" date="1998" name="Biochem. Biophys. Res. Commun.">
        <title>Cleavage of the C-terminus of NEDD8 by UCH-L3.</title>
        <authorList>
            <person name="Wada H."/>
            <person name="Kito K."/>
            <person name="Caskey L.S."/>
            <person name="Yeh E.T.H."/>
            <person name="Kamitani T."/>
        </authorList>
    </citation>
    <scope>TISSUE SPECIFICITY</scope>
</reference>
<reference key="13">
    <citation type="journal article" date="2002" name="Cell">
        <title>The UCH-L1 gene encodes two opposing enzymatic activities that affect alpha-synuclein degradation and Parkinson's disease susceptibility.</title>
        <authorList>
            <person name="Liu Y."/>
            <person name="Fallon L."/>
            <person name="Lashuel H.A."/>
            <person name="Liu Z."/>
            <person name="Lansbury P.T. Jr."/>
        </authorList>
    </citation>
    <scope>FUNCTION</scope>
    <scope>CATALYTIC ACTIVITY</scope>
    <scope>CHARACTERIZATION OF VARIANT PARK5 MET-93</scope>
    <scope>CHARACTERIZATION OF VARIANT TYR-18</scope>
</reference>
<reference key="14">
    <citation type="journal article" date="2002" name="Oncogene">
        <title>Interaction and colocalization of PGP9.5 with JAB1 and p27(Kip1).</title>
        <authorList>
            <person name="Caballero O.L."/>
            <person name="Resto V."/>
            <person name="Patturajan M."/>
            <person name="Meerzaman D."/>
            <person name="Guo M.Z."/>
            <person name="Engles J."/>
            <person name="Yochem R."/>
            <person name="Ratovitski E."/>
            <person name="Sidransky D."/>
            <person name="Jen J."/>
        </authorList>
    </citation>
    <scope>INTERACTION WITH COPS5</scope>
</reference>
<reference key="15">
    <citation type="journal article" date="2006" name="Biochemistry">
        <title>Mechanistic studies of ubiquitin C-terminal hydrolase L1.</title>
        <authorList>
            <person name="Case A."/>
            <person name="Stein R.L."/>
        </authorList>
    </citation>
    <scope>CATALYTIC ACTIVITY</scope>
    <scope>ACTIVE SITE</scope>
</reference>
<reference key="16">
    <citation type="journal article" date="2009" name="Proc. Natl. Acad. Sci. U.S.A.">
        <title>Membrane-associated farnesylated UCH-L1 promotes alpha-synuclein neurotoxicity and is a therapeutic target for Parkinson's disease.</title>
        <authorList>
            <person name="Liu Z."/>
            <person name="Meray R.K."/>
            <person name="Grammatopoulos T.N."/>
            <person name="Fredenburg R.A."/>
            <person name="Cookson M.R."/>
            <person name="Liu Y."/>
            <person name="Logan T."/>
            <person name="Lansbury P.T. Jr."/>
        </authorList>
    </citation>
    <scope>SUBCELLULAR LOCATION</scope>
    <scope>ISOPRENYLATION AT CYS-220</scope>
</reference>
<reference key="17">
    <citation type="journal article" date="2009" name="Science">
        <title>Lysine acetylation targets protein complexes and co-regulates major cellular functions.</title>
        <authorList>
            <person name="Choudhary C."/>
            <person name="Kumar C."/>
            <person name="Gnad F."/>
            <person name="Nielsen M.L."/>
            <person name="Rehman M."/>
            <person name="Walther T.C."/>
            <person name="Olsen J.V."/>
            <person name="Mann M."/>
        </authorList>
    </citation>
    <scope>IDENTIFICATION BY MASS SPECTROMETRY [LARGE SCALE ANALYSIS]</scope>
</reference>
<reference key="18">
    <citation type="journal article" date="2011" name="BMC Syst. Biol.">
        <title>Initial characterization of the human central proteome.</title>
        <authorList>
            <person name="Burkard T.R."/>
            <person name="Planyavsky M."/>
            <person name="Kaupe I."/>
            <person name="Breitwieser F.P."/>
            <person name="Buerckstuemmer T."/>
            <person name="Bennett K.L."/>
            <person name="Superti-Furga G."/>
            <person name="Colinge J."/>
        </authorList>
    </citation>
    <scope>IDENTIFICATION BY MASS SPECTROMETRY [LARGE SCALE ANALYSIS]</scope>
</reference>
<reference key="19">
    <citation type="journal article" date="2012" name="J. Neurochem.">
        <title>Control of BACE1 degradation and APP processing by ubiquitin carboxyl-terminal hydrolase L1.</title>
        <authorList>
            <person name="Zhang M."/>
            <person name="Deng Y."/>
            <person name="Luo Y."/>
            <person name="Zhang S."/>
            <person name="Zou H."/>
            <person name="Cai F."/>
            <person name="Wada K."/>
            <person name="Song W."/>
        </authorList>
    </citation>
    <scope>FUNCTION</scope>
</reference>
<reference key="20">
    <citation type="journal article" date="2013" name="Proc. Natl. Acad. Sci. U.S.A.">
        <title>Recessive loss of function of the neuronal ubiquitin hydrolase UCHL1 leads to early-onset progressive neurodegeneration.</title>
        <authorList>
            <person name="Bilguvar K."/>
            <person name="Tyagi N.K."/>
            <person name="Ozkara C."/>
            <person name="Tuysuz B."/>
            <person name="Bakircioglu M."/>
            <person name="Choi M."/>
            <person name="Delil S."/>
            <person name="Caglayan A.O."/>
            <person name="Baranoski J.F."/>
            <person name="Erturk O."/>
            <person name="Yalcinkaya C."/>
            <person name="Karacorlu M."/>
            <person name="Dincer A."/>
            <person name="Johnson M.H."/>
            <person name="Mane S."/>
            <person name="Chandra S.S."/>
            <person name="Louvi A."/>
            <person name="Boggon T.J."/>
            <person name="Lifton R.P."/>
            <person name="Horwich A.L."/>
            <person name="Gunel M."/>
        </authorList>
    </citation>
    <scope>FUNCTION</scope>
    <scope>CATALYTIC ACTIVITY</scope>
    <scope>VARIANTS SPG79B ALA-7 AND MET-93</scope>
    <scope>CHARACTERIZATION OF VARIANT SPG79B ALA-7</scope>
    <scope>MUTAGENESIS OF CYS-90</scope>
</reference>
<reference key="21">
    <citation type="journal article" date="2015" name="Nat. Commun.">
        <title>UCHL1 provides diagnostic and antimetastatic strategies due to its deubiquitinating effect on HIF-1alpha.</title>
        <authorList>
            <person name="Goto Y."/>
            <person name="Zeng L."/>
            <person name="Yeom C.J."/>
            <person name="Zhu Y."/>
            <person name="Morinibu A."/>
            <person name="Shinomiya K."/>
            <person name="Kobayashi M."/>
            <person name="Hirota K."/>
            <person name="Itasaka S."/>
            <person name="Yoshimura M."/>
            <person name="Tanimoto K."/>
            <person name="Torii M."/>
            <person name="Sowa T."/>
            <person name="Menju T."/>
            <person name="Sonobe M."/>
            <person name="Kakeya H."/>
            <person name="Toi M."/>
            <person name="Date H."/>
            <person name="Hammond E.M."/>
            <person name="Hiraoka M."/>
            <person name="Harada H."/>
        </authorList>
    </citation>
    <scope>FUNCTION</scope>
    <scope>CATALYTIC ACTIVITY</scope>
    <scope>MUTAGENESIS OF CYS-90</scope>
</reference>
<reference key="22">
    <citation type="journal article" date="2023" name="Life. Sci Alliance">
        <title>N-terminal proteoforms may engage in different protein complexes.</title>
        <authorList>
            <person name="Bogaert A."/>
            <person name="Fijalkowska D."/>
            <person name="Staes A."/>
            <person name="Van de Steene T."/>
            <person name="Vuylsteke M."/>
            <person name="Stadler C."/>
            <person name="Eyckerman S."/>
            <person name="Spirohn K."/>
            <person name="Hao T."/>
            <person name="Calderwood M.A."/>
            <person name="Gevaert K."/>
        </authorList>
    </citation>
    <scope>IDENTIFICATION BY MASS SPECTROMETRY (ISOFORMS 2 AND 3)</scope>
    <scope>ACETYLATION AT MET-1 (ISOFORMS 1; 2 AND 3)</scope>
</reference>
<reference key="23">
    <citation type="journal article" date="2006" name="Proc. Natl. Acad. Sci. U.S.A.">
        <title>Structural basis for conformational plasticity of the Parkinson's disease-associated ubiquitin hydrolase UCH-L1.</title>
        <authorList>
            <person name="Das C."/>
            <person name="Hoang Q.Q."/>
            <person name="Kreinbring C.A."/>
            <person name="Luchansky S.J."/>
            <person name="Meray R.K."/>
            <person name="Ray S.S."/>
            <person name="Lansbury P.T."/>
            <person name="Ringe D."/>
            <person name="Petsko G.A."/>
        </authorList>
    </citation>
    <scope>X-RAY CRYSTALLOGRAPHY (2.4 ANGSTROMS)</scope>
    <scope>SUBUNIT</scope>
</reference>
<reference key="24">
    <citation type="journal article" date="2010" name="Proc. Natl. Acad. Sci. U.S.A.">
        <title>Ubiquitin vinyl methyl ester binding orients the misaligned active site of the ubiquitin hydrolase UCHL1 into productive conformation.</title>
        <authorList>
            <person name="Boudreaux D.A."/>
            <person name="Maiti T.K."/>
            <person name="Davies C.W."/>
            <person name="Das C."/>
        </authorList>
    </citation>
    <scope>X-RAY CRYSTALLOGRAPHY (2.8 ANGSTROMS) OF VARIANTS TYR-18 AND MET-93 IN COMPLEX WITH UBIQUITIN</scope>
    <scope>CATALYTIC ACTIVITY</scope>
    <scope>ACTIVE SITE</scope>
    <scope>MUTAGENESIS OF CYS-90 AND PHE-204</scope>
</reference>
<reference key="25">
    <citation type="journal article" date="2003" name="Biochem. Biophys. Res. Commun.">
        <title>Alterations of structure and hydrolase activity of parkinsonism-associated human ubiquitin carboxyl-terminal hydrolase L1 variants.</title>
        <authorList>
            <person name="Nishikawa K."/>
            <person name="Li H."/>
            <person name="Kawamura R."/>
            <person name="Osaka H."/>
            <person name="Wang Y.-L."/>
            <person name="Hara Y."/>
            <person name="Hirokawa T."/>
            <person name="Manago Y."/>
            <person name="Amano T."/>
            <person name="Noda M."/>
            <person name="Aoki S."/>
            <person name="Wada K."/>
        </authorList>
    </citation>
    <scope>CHARACTERIZATION OF VARIANT PARK5 MET-93</scope>
    <scope>CHARACTERIZATION OF VARIANT TYR-18</scope>
    <scope>MUTAGENESIS OF CYS-90</scope>
    <scope>CATALYTIC ACTIVITY</scope>
    <scope>BIOPHYSICOCHEMICAL PROPERTIES</scope>
</reference>
<reference key="26">
    <citation type="journal article" date="1999" name="Neurosci. Lett.">
        <title>The Ile93Met mutation in the ubiquitin carboxy-terminal-hydrolase-L1 gene is not observed in European cases with familial Parkinson's disease.</title>
        <authorList>
            <person name="Harhangi B.S."/>
            <person name="Farrer M.J."/>
            <person name="Lincoln S."/>
            <person name="Bonifati V."/>
            <person name="Meco G."/>
            <person name="De Michele G."/>
            <person name="Brice A."/>
            <person name="Durr A."/>
            <person name="Martinez M."/>
            <person name="Gasser T."/>
            <person name="Bereznai B."/>
            <person name="Vaughan J.R."/>
            <person name="Wood N.W."/>
            <person name="Hardy J."/>
            <person name="Oostra B.A."/>
            <person name="Breteler M.M."/>
        </authorList>
    </citation>
    <scope>VARIANT MET-93</scope>
</reference>
<reference key="27">
    <citation type="journal article" date="1999" name="NeuroReport">
        <title>Low frequency of pathogenic mutations in the ubiquitin carboxy-terminal hydrolase gene in familial Parkinson's disease.</title>
        <authorList>
            <person name="Lincoln S."/>
            <person name="Vaughan J."/>
            <person name="Wood N."/>
            <person name="Baker M."/>
            <person name="Adamson J."/>
            <person name="Gwinn-Hardy K."/>
            <person name="Lynch T."/>
            <person name="Hardy J."/>
            <person name="Farrer M."/>
        </authorList>
    </citation>
    <scope>VARIANT TYR-18</scope>
</reference>
<reference key="28">
    <citation type="journal article" date="2000" name="Neurosci. Lett.">
        <title>The ubiquitin carboxy-terminal hydrolase-L1 gene S18Y polymorphism does not confer protection against idiopathic Parkinson's disease.</title>
        <authorList>
            <person name="Mellick G.D."/>
            <person name="Silburn P.A."/>
        </authorList>
    </citation>
    <scope>VARIANT TYR-18</scope>
</reference>
<reference key="29">
    <citation type="journal article" date="2004" name="Ann. Neurol.">
        <title>UCHL1 is a Parkinson's disease susceptibility gene.</title>
        <authorList>
            <consortium name="UCHL1 global genetics consortium"/>
            <person name="Maraganore D.M."/>
            <person name="Lesnick T.G."/>
            <person name="Elbaz A."/>
            <person name="Chartier-Harlin M.-C."/>
            <person name="Gasser T."/>
            <person name="Krueger R."/>
            <person name="Hattori N."/>
            <person name="Mellick G.D."/>
            <person name="Quattrone A."/>
            <person name="Satoh J."/>
            <person name="Toda T."/>
            <person name="Wang J."/>
            <person name="Ioannidis J.P.A."/>
            <person name="de Andrade M."/>
            <person name="Rocca W.A."/>
        </authorList>
    </citation>
    <scope>VARIANT TYR-18</scope>
</reference>
<reference key="30">
    <citation type="journal article" date="2004" name="Ann. Neurol.">
        <authorList>
            <consortium name="UCHL1 global genetics consortium"/>
            <person name="Maraganore D.M."/>
            <person name="Lesnick T.G."/>
            <person name="Elbaz A."/>
            <person name="Chartier-Harlin M.-C."/>
            <person name="Gasser T."/>
            <person name="Krueger R."/>
            <person name="Hattori N."/>
            <person name="Mellick G.D."/>
            <person name="Quattrone A."/>
            <person name="Satoh J."/>
            <person name="Toda T."/>
            <person name="Wang J."/>
            <person name="Ioannidis J.P.A."/>
            <person name="de Andrade M."/>
            <person name="Rocca W.A."/>
        </authorList>
    </citation>
    <scope>ERRATUM OF PUBMED:15048890</scope>
</reference>
<reference key="31">
    <citation type="journal article" date="2006" name="Ann. Neurol.">
        <title>UCHL-1 is not a Parkinson's disease susceptibility gene.</title>
        <authorList>
            <person name="Healy D.G."/>
            <person name="Abou-Sleiman P.M."/>
            <person name="Casas J.P."/>
            <person name="Ahmadi K.R."/>
            <person name="Lynch T."/>
            <person name="Gandhi S."/>
            <person name="Muqit M.M."/>
            <person name="Foltynie T."/>
            <person name="Barker R."/>
            <person name="Bhatia K.P."/>
            <person name="Quinn N.P."/>
            <person name="Lees A.J."/>
            <person name="Gibson J.M."/>
            <person name="Holton J.L."/>
            <person name="Revesz T."/>
            <person name="Goldstein D.B."/>
            <person name="Wood N.W."/>
        </authorList>
    </citation>
    <scope>VARIANT TYR-18</scope>
    <scope>LACK OF ASSOCIATION OF VARIANT TYR-18 WITH PARKINSON DISEASE</scope>
</reference>
<reference key="32">
    <citation type="journal article" date="2008" name="Hum. Mol. Genet.">
        <title>The S18Y polymorphic variant of UCH-L1 confers an antioxidant function to neuronal cells.</title>
        <authorList>
            <person name="Kyratzi E."/>
            <person name="Pavlaki M."/>
            <person name="Stefanis L."/>
        </authorList>
    </citation>
    <scope>CHARACTERIZATION OF VARIANT TYR-18</scope>
    <scope>ANTIOXIDANT FUNCTION IN NEURONAL CELLS</scope>
</reference>
<reference key="33">
    <citation type="journal article" date="2011" name="Ophthalmic Genet.">
        <title>Ubiquitin carboxyl-terminal esterase L1 (UCHL1) S18Y polymorphism in patients with cataracts.</title>
        <authorList>
            <person name="Rudolph T."/>
            <person name="Sjolander A."/>
            <person name="Palmer M.S."/>
            <person name="Minthon L."/>
            <person name="Wallin A."/>
            <person name="Andreasen N."/>
            <person name="Tasa G."/>
            <person name="Juronen E."/>
            <person name="Blennow K."/>
            <person name="Zetterberg H."/>
            <person name="Zetterberg M."/>
        </authorList>
    </citation>
    <scope>VARIANT TYR-18</scope>
</reference>
<reference key="34">
    <citation type="journal article" date="2017" name="Hum. Mol. Genet.">
        <title>Novel UCHL1 mutations reveal new insights into ubiquitin processing.</title>
        <authorList>
            <person name="Rydning S.L."/>
            <person name="Backe P.H."/>
            <person name="Sousa M.M."/>
            <person name="Iqbal Z."/>
            <person name="Oeye A.M."/>
            <person name="Sheng Y."/>
            <person name="Yang M."/>
            <person name="Lin X."/>
            <person name="Slupphaug G."/>
            <person name="Nordenmark T.H."/>
            <person name="Vigeland M.D."/>
            <person name="Bjoeraas M."/>
            <person name="Tallaksen C.M."/>
            <person name="Selmer K.K."/>
        </authorList>
    </citation>
    <scope>VARIANTS SPG79B GLN-178 AND ASP-216</scope>
    <scope>CHARACTERIZATION OF VARIANTS SPG79B GLN-178 AND ASP-216</scope>
</reference>
<reference key="35">
    <citation type="journal article" date="2022" name="Genet. Med.">
        <title>Heterozygous UCHL1 loss-of-function variants cause a neurodegenerative disorder with spasticity, ataxia, neuropathy, and optic atrophy.</title>
        <authorList>
            <consortium name="Genomics England Research Consortium"/>
            <person name="Park J."/>
            <person name="Tucci A."/>
            <person name="Cipriani V."/>
            <person name="Demidov G."/>
            <person name="Rocca C."/>
            <person name="Senderek J."/>
            <person name="Butryn M."/>
            <person name="Velic A."/>
            <person name="Lam T."/>
            <person name="Galanaki E."/>
            <person name="Cali E."/>
            <person name="Vestito L."/>
            <person name="Maroofian R."/>
            <person name="Deininger N."/>
            <person name="Rautenberg M."/>
            <person name="Admard J."/>
            <person name="Hahn G.A."/>
            <person name="Bartels C."/>
            <person name="van Os N.J.H."/>
            <person name="Horvath R."/>
            <person name="Chinnery P.F."/>
            <person name="Tiet M.Y."/>
            <person name="Hewamadduma C."/>
            <person name="Hadjivassiliou M."/>
            <person name="Tofaris G.K."/>
            <person name="Wood N.W."/>
            <person name="Hayer S.N."/>
            <person name="Bender F."/>
            <person name="Menden B."/>
            <person name="Cordts I."/>
            <person name="Klein K."/>
            <person name="Nguyen H.P."/>
            <person name="Krauss J.K."/>
            <person name="Blahak C."/>
            <person name="Strom T.M."/>
            <person name="Sturm M."/>
            <person name="van de Warrenburg B."/>
            <person name="Lerche H."/>
            <person name="Macek B."/>
            <person name="Synofzik M."/>
            <person name="Ossowski S."/>
            <person name="Timmann D."/>
            <person name="Wolf M.E."/>
            <person name="Smedley D."/>
            <person name="Riess O."/>
            <person name="Schoels L."/>
            <person name="Houlden H."/>
            <person name="Haack T.B."/>
            <person name="Hengel H."/>
        </authorList>
    </citation>
    <scope>VARIANTS SPG79A 2-GLN--ALA-223 DEL; 25-GLN--ALA-223 DEL; LEU-52 INS; 178-ARG--ALA-223 DEL AND 211-GLU--ALA-223 DEL</scope>
    <scope>INVOLVEMENT IN SPG79A</scope>
</reference>
<sequence>MQLKPMEINPEMLNKVLSRLGVAGQWRFVDVLGLEEESLGSVPAPACALLLLFPLTAQHENFRKKQIEELKGQEVSPKVYFMKQTIGNSCGTIGLIHAVANNQDKLGFEDGSVLKQFLSETEKMSPEDRAKCFEKNEAIQAAHDAVAQEGQCRVDDKVNFHFILFNNVDGHLYELDGRMPFPVNHGASSEDTLLKDAAKVCREFTEREQGEVRFSAVALCKAA</sequence>
<evidence type="ECO:0000250" key="1"/>
<evidence type="ECO:0000250" key="2">
    <source>
        <dbReference type="UniProtKB" id="Q00981"/>
    </source>
</evidence>
<evidence type="ECO:0000250" key="3">
    <source>
        <dbReference type="UniProtKB" id="Q9R0P9"/>
    </source>
</evidence>
<evidence type="ECO:0000255" key="4">
    <source>
        <dbReference type="PROSITE-ProRule" id="PRU01393"/>
    </source>
</evidence>
<evidence type="ECO:0000269" key="5">
    <source>
    </source>
</evidence>
<evidence type="ECO:0000269" key="6">
    <source>
    </source>
</evidence>
<evidence type="ECO:0000269" key="7">
    <source>
    </source>
</evidence>
<evidence type="ECO:0000269" key="8">
    <source>
    </source>
</evidence>
<evidence type="ECO:0000269" key="9">
    <source>
    </source>
</evidence>
<evidence type="ECO:0000269" key="10">
    <source>
    </source>
</evidence>
<evidence type="ECO:0000269" key="11">
    <source>
    </source>
</evidence>
<evidence type="ECO:0000269" key="12">
    <source>
    </source>
</evidence>
<evidence type="ECO:0000269" key="13">
    <source>
    </source>
</evidence>
<evidence type="ECO:0000269" key="14">
    <source>
    </source>
</evidence>
<evidence type="ECO:0000269" key="15">
    <source>
    </source>
</evidence>
<evidence type="ECO:0000269" key="16">
    <source>
    </source>
</evidence>
<evidence type="ECO:0000269" key="17">
    <source>
    </source>
</evidence>
<evidence type="ECO:0000269" key="18">
    <source>
    </source>
</evidence>
<evidence type="ECO:0000269" key="19">
    <source>
    </source>
</evidence>
<evidence type="ECO:0000269" key="20">
    <source>
    </source>
</evidence>
<evidence type="ECO:0000269" key="21">
    <source>
    </source>
</evidence>
<evidence type="ECO:0000269" key="22">
    <source>
    </source>
</evidence>
<evidence type="ECO:0000269" key="23">
    <source>
    </source>
</evidence>
<evidence type="ECO:0000269" key="24">
    <source>
    </source>
</evidence>
<evidence type="ECO:0000269" key="25">
    <source>
    </source>
</evidence>
<evidence type="ECO:0000269" key="26">
    <source>
    </source>
</evidence>
<evidence type="ECO:0000269" key="27">
    <source>
    </source>
</evidence>
<evidence type="ECO:0000269" key="28">
    <source>
    </source>
</evidence>
<evidence type="ECO:0000305" key="29"/>
<evidence type="ECO:0000305" key="30">
    <source>
    </source>
</evidence>
<evidence type="ECO:0000305" key="31">
    <source>
    </source>
</evidence>
<evidence type="ECO:0007829" key="32">
    <source>
        <dbReference type="PDB" id="2LEN"/>
    </source>
</evidence>
<evidence type="ECO:0007829" key="33">
    <source>
        <dbReference type="PDB" id="8EDE"/>
    </source>
</evidence>
<organism>
    <name type="scientific">Homo sapiens</name>
    <name type="common">Human</name>
    <dbReference type="NCBI Taxonomy" id="9606"/>
    <lineage>
        <taxon>Eukaryota</taxon>
        <taxon>Metazoa</taxon>
        <taxon>Chordata</taxon>
        <taxon>Craniata</taxon>
        <taxon>Vertebrata</taxon>
        <taxon>Euteleostomi</taxon>
        <taxon>Mammalia</taxon>
        <taxon>Eutheria</taxon>
        <taxon>Euarchontoglires</taxon>
        <taxon>Primates</taxon>
        <taxon>Haplorrhini</taxon>
        <taxon>Catarrhini</taxon>
        <taxon>Hominidae</taxon>
        <taxon>Homo</taxon>
    </lineage>
</organism>
<dbReference type="EC" id="3.4.19.12" evidence="9 10 14 18 21 26 27"/>
<dbReference type="EMBL" id="AC095043">
    <property type="protein sequence ID" value="AAY40923.1"/>
    <property type="molecule type" value="Genomic_DNA"/>
</dbReference>
<dbReference type="EMBL" id="CH471069">
    <property type="protein sequence ID" value="EAW92983.1"/>
    <property type="molecule type" value="Genomic_DNA"/>
</dbReference>
<dbReference type="EMBL" id="BC000332">
    <property type="protein sequence ID" value="AAH00332.1"/>
    <property type="molecule type" value="mRNA"/>
</dbReference>
<dbReference type="EMBL" id="BC005117">
    <property type="protein sequence ID" value="AAH05117.1"/>
    <property type="molecule type" value="mRNA"/>
</dbReference>
<dbReference type="EMBL" id="BC006305">
    <property type="protein sequence ID" value="AAH06305.1"/>
    <property type="molecule type" value="mRNA"/>
</dbReference>
<dbReference type="EMBL" id="X17377">
    <property type="protein sequence ID" value="CAA35249.1"/>
    <property type="molecule type" value="Genomic_DNA"/>
</dbReference>
<dbReference type="EMBL" id="X04741">
    <property type="protein sequence ID" value="CAA28443.1"/>
    <property type="status" value="ALT_INIT"/>
    <property type="molecule type" value="mRNA"/>
</dbReference>
<dbReference type="EMBL" id="AH007277">
    <property type="protein sequence ID" value="AAD09172.1"/>
    <property type="molecule type" value="Genomic_DNA"/>
</dbReference>
<dbReference type="CCDS" id="CCDS3462.1">
    <molecule id="P09936-1"/>
</dbReference>
<dbReference type="PIR" id="A25856">
    <property type="entry name" value="A25856"/>
</dbReference>
<dbReference type="RefSeq" id="NP_004172.2">
    <molecule id="P09936-1"/>
    <property type="nucleotide sequence ID" value="NM_004181.4"/>
</dbReference>
<dbReference type="PDB" id="2ETL">
    <property type="method" value="X-ray"/>
    <property type="resolution" value="2.40 A"/>
    <property type="chains" value="A/B=1-223"/>
</dbReference>
<dbReference type="PDB" id="2LEN">
    <property type="method" value="NMR"/>
    <property type="chains" value="A=1-223"/>
</dbReference>
<dbReference type="PDB" id="3IFW">
    <property type="method" value="X-ray"/>
    <property type="resolution" value="2.40 A"/>
    <property type="chains" value="A=1-223"/>
</dbReference>
<dbReference type="PDB" id="3IRT">
    <property type="method" value="X-ray"/>
    <property type="resolution" value="2.80 A"/>
    <property type="chains" value="A/B=1-223"/>
</dbReference>
<dbReference type="PDB" id="3KVF">
    <property type="method" value="X-ray"/>
    <property type="resolution" value="2.80 A"/>
    <property type="chains" value="A=1-223"/>
</dbReference>
<dbReference type="PDB" id="3KW5">
    <property type="method" value="X-ray"/>
    <property type="resolution" value="2.83 A"/>
    <property type="chains" value="A=1-223"/>
</dbReference>
<dbReference type="PDB" id="4DM9">
    <property type="method" value="X-ray"/>
    <property type="resolution" value="2.35 A"/>
    <property type="chains" value="A/B=1-223"/>
</dbReference>
<dbReference type="PDB" id="4JKJ">
    <property type="method" value="X-ray"/>
    <property type="resolution" value="2.15 A"/>
    <property type="chains" value="A/B=1-223"/>
</dbReference>
<dbReference type="PDB" id="7ZM0">
    <property type="method" value="X-ray"/>
    <property type="resolution" value="2.24 A"/>
    <property type="chains" value="A/B/C/D/E/F/G/H/I/J=1-223"/>
</dbReference>
<dbReference type="PDB" id="8DY8">
    <property type="method" value="X-ray"/>
    <property type="resolution" value="2.10 A"/>
    <property type="chains" value="A/B=1-223"/>
</dbReference>
<dbReference type="PDB" id="8EDE">
    <property type="method" value="X-ray"/>
    <property type="resolution" value="1.80 A"/>
    <property type="chains" value="A/B=1-223"/>
</dbReference>
<dbReference type="PDB" id="8PW1">
    <property type="method" value="X-ray"/>
    <property type="resolution" value="2.20 A"/>
    <property type="chains" value="A/B/C/D/E/F/G/H/I/J=1-223"/>
</dbReference>
<dbReference type="PDB" id="8XI7">
    <property type="method" value="X-ray"/>
    <property type="resolution" value="1.95 A"/>
    <property type="chains" value="A/B=1-223"/>
</dbReference>
<dbReference type="PDBsum" id="2ETL"/>
<dbReference type="PDBsum" id="2LEN"/>
<dbReference type="PDBsum" id="3IFW"/>
<dbReference type="PDBsum" id="3IRT"/>
<dbReference type="PDBsum" id="3KVF"/>
<dbReference type="PDBsum" id="3KW5"/>
<dbReference type="PDBsum" id="4DM9"/>
<dbReference type="PDBsum" id="4JKJ"/>
<dbReference type="PDBsum" id="7ZM0"/>
<dbReference type="PDBsum" id="8DY8"/>
<dbReference type="PDBsum" id="8EDE"/>
<dbReference type="PDBsum" id="8PW1"/>
<dbReference type="PDBsum" id="8XI7"/>
<dbReference type="BMRB" id="P09936"/>
<dbReference type="SASBDB" id="P09936"/>
<dbReference type="SMR" id="P09936"/>
<dbReference type="BioGRID" id="113192">
    <property type="interactions" value="254"/>
</dbReference>
<dbReference type="CORUM" id="P09936"/>
<dbReference type="DIP" id="DIP-36620N"/>
<dbReference type="FunCoup" id="P09936">
    <property type="interactions" value="1475"/>
</dbReference>
<dbReference type="IntAct" id="P09936">
    <property type="interactions" value="92"/>
</dbReference>
<dbReference type="MINT" id="P09936"/>
<dbReference type="STRING" id="9606.ENSP00000284440"/>
<dbReference type="BindingDB" id="P09936"/>
<dbReference type="ChEMBL" id="CHEMBL6159"/>
<dbReference type="DrugBank" id="DB12695">
    <property type="generic name" value="Phenethyl Isothiocyanate"/>
</dbReference>
<dbReference type="GuidetoPHARMACOLOGY" id="2426"/>
<dbReference type="MEROPS" id="C12.001"/>
<dbReference type="GlyGen" id="P09936">
    <property type="glycosylation" value="1 site, 1 O-linked glycan (1 site)"/>
</dbReference>
<dbReference type="iPTMnet" id="P09936"/>
<dbReference type="MetOSite" id="P09936"/>
<dbReference type="PhosphoSitePlus" id="P09936"/>
<dbReference type="SwissPalm" id="P09936"/>
<dbReference type="BioMuta" id="UCHL1"/>
<dbReference type="DMDM" id="136681"/>
<dbReference type="CPTAC" id="CPTAC-601"/>
<dbReference type="CPTAC" id="CPTAC-602"/>
<dbReference type="jPOST" id="P09936"/>
<dbReference type="MassIVE" id="P09936"/>
<dbReference type="PaxDb" id="9606-ENSP00000284440"/>
<dbReference type="PeptideAtlas" id="P09936"/>
<dbReference type="ProteomicsDB" id="52282"/>
<dbReference type="Pumba" id="P09936"/>
<dbReference type="Antibodypedia" id="1062">
    <property type="antibodies" value="2366 antibodies from 52 providers"/>
</dbReference>
<dbReference type="DNASU" id="7345"/>
<dbReference type="Ensembl" id="ENST00000284440.9">
    <molecule id="P09936-1"/>
    <property type="protein sequence ID" value="ENSP00000284440.4"/>
    <property type="gene ID" value="ENSG00000154277.13"/>
</dbReference>
<dbReference type="Ensembl" id="ENST00000503431.5">
    <molecule id="P09936-1"/>
    <property type="protein sequence ID" value="ENSP00000422542.1"/>
    <property type="gene ID" value="ENSG00000154277.13"/>
</dbReference>
<dbReference type="GeneID" id="7345"/>
<dbReference type="KEGG" id="hsa:7345"/>
<dbReference type="MANE-Select" id="ENST00000284440.9">
    <property type="protein sequence ID" value="ENSP00000284440.4"/>
    <property type="RefSeq nucleotide sequence ID" value="NM_004181.5"/>
    <property type="RefSeq protein sequence ID" value="NP_004172.2"/>
</dbReference>
<dbReference type="AGR" id="HGNC:12513"/>
<dbReference type="CTD" id="7345"/>
<dbReference type="DisGeNET" id="7345"/>
<dbReference type="GeneCards" id="UCHL1"/>
<dbReference type="HGNC" id="HGNC:12513">
    <property type="gene designation" value="UCHL1"/>
</dbReference>
<dbReference type="HPA" id="ENSG00000154277">
    <property type="expression patterns" value="Group enriched (brain, pituitary gland)"/>
</dbReference>
<dbReference type="MalaCards" id="UCHL1"/>
<dbReference type="MIM" id="191342">
    <property type="type" value="gene"/>
</dbReference>
<dbReference type="MIM" id="613643">
    <property type="type" value="phenotype"/>
</dbReference>
<dbReference type="MIM" id="615491">
    <property type="type" value="phenotype"/>
</dbReference>
<dbReference type="MIM" id="620221">
    <property type="type" value="phenotype"/>
</dbReference>
<dbReference type="neXtProt" id="NX_P09936"/>
<dbReference type="OpenTargets" id="ENSG00000154277"/>
<dbReference type="Orphanet" id="352654">
    <property type="disease" value="Early-onset progressive neurodegeneration-blindness-ataxia-spasticity syndrome"/>
</dbReference>
<dbReference type="Orphanet" id="2828">
    <property type="disease" value="Young-onset Parkinson disease"/>
</dbReference>
<dbReference type="PharmGKB" id="PA37160"/>
<dbReference type="VEuPathDB" id="HostDB:ENSG00000154277"/>
<dbReference type="eggNOG" id="KOG1415">
    <property type="taxonomic scope" value="Eukaryota"/>
</dbReference>
<dbReference type="GeneTree" id="ENSGT00940000157306"/>
<dbReference type="HOGENOM" id="CLU_054406_2_0_1"/>
<dbReference type="InParanoid" id="P09936"/>
<dbReference type="OMA" id="AQTYSKH"/>
<dbReference type="OrthoDB" id="427186at2759"/>
<dbReference type="PAN-GO" id="P09936">
    <property type="GO annotations" value="3 GO annotations based on evolutionary models"/>
</dbReference>
<dbReference type="PhylomeDB" id="P09936"/>
<dbReference type="TreeFam" id="TF316166"/>
<dbReference type="BRENDA" id="3.4.19.12">
    <property type="organism ID" value="2681"/>
</dbReference>
<dbReference type="PathwayCommons" id="P09936"/>
<dbReference type="Reactome" id="R-HSA-5689603">
    <property type="pathway name" value="UCH proteinases"/>
</dbReference>
<dbReference type="SABIO-RK" id="P09936"/>
<dbReference type="SignaLink" id="P09936"/>
<dbReference type="SIGNOR" id="P09936"/>
<dbReference type="BioGRID-ORCS" id="7345">
    <property type="hits" value="9 hits in 1196 CRISPR screens"/>
</dbReference>
<dbReference type="CD-CODE" id="FB4E32DD">
    <property type="entry name" value="Presynaptic clusters and postsynaptic densities"/>
</dbReference>
<dbReference type="ChiTaRS" id="UCHL1">
    <property type="organism name" value="human"/>
</dbReference>
<dbReference type="EvolutionaryTrace" id="P09936"/>
<dbReference type="GeneWiki" id="Ubiquitin_carboxy-terminal_hydrolase_L1"/>
<dbReference type="GenomeRNAi" id="7345"/>
<dbReference type="Pharos" id="P09936">
    <property type="development level" value="Tchem"/>
</dbReference>
<dbReference type="PRO" id="PR:P09936"/>
<dbReference type="Proteomes" id="UP000005640">
    <property type="component" value="Chromosome 4"/>
</dbReference>
<dbReference type="RNAct" id="P09936">
    <property type="molecule type" value="protein"/>
</dbReference>
<dbReference type="Bgee" id="ENSG00000154277">
    <property type="expression patterns" value="Expressed in pons and 169 other cell types or tissues"/>
</dbReference>
<dbReference type="ExpressionAtlas" id="P09936">
    <property type="expression patterns" value="baseline and differential"/>
</dbReference>
<dbReference type="GO" id="GO:1904115">
    <property type="term" value="C:axon cytoplasm"/>
    <property type="evidence" value="ECO:0007669"/>
    <property type="project" value="GOC"/>
</dbReference>
<dbReference type="GO" id="GO:0005737">
    <property type="term" value="C:cytoplasm"/>
    <property type="evidence" value="ECO:0000314"/>
    <property type="project" value="BHF-UCL"/>
</dbReference>
<dbReference type="GO" id="GO:0005829">
    <property type="term" value="C:cytosol"/>
    <property type="evidence" value="ECO:0000314"/>
    <property type="project" value="HPA"/>
</dbReference>
<dbReference type="GO" id="GO:0005789">
    <property type="term" value="C:endoplasmic reticulum membrane"/>
    <property type="evidence" value="ECO:0007669"/>
    <property type="project" value="UniProtKB-SubCell"/>
</dbReference>
<dbReference type="GO" id="GO:0044306">
    <property type="term" value="C:neuron projection terminus"/>
    <property type="evidence" value="ECO:0007669"/>
    <property type="project" value="Ensembl"/>
</dbReference>
<dbReference type="GO" id="GO:0043025">
    <property type="term" value="C:neuronal cell body"/>
    <property type="evidence" value="ECO:0007669"/>
    <property type="project" value="Ensembl"/>
</dbReference>
<dbReference type="GO" id="GO:0005654">
    <property type="term" value="C:nucleoplasm"/>
    <property type="evidence" value="ECO:0000314"/>
    <property type="project" value="HPA"/>
</dbReference>
<dbReference type="GO" id="GO:0031694">
    <property type="term" value="F:alpha-2A adrenergic receptor binding"/>
    <property type="evidence" value="ECO:0000353"/>
    <property type="project" value="BHF-UCL"/>
</dbReference>
<dbReference type="GO" id="GO:0004843">
    <property type="term" value="F:cysteine-type deubiquitinase activity"/>
    <property type="evidence" value="ECO:0000314"/>
    <property type="project" value="UniProtKB"/>
</dbReference>
<dbReference type="GO" id="GO:0004197">
    <property type="term" value="F:cysteine-type endopeptidase activity"/>
    <property type="evidence" value="ECO:0000314"/>
    <property type="project" value="UniProtKB"/>
</dbReference>
<dbReference type="GO" id="GO:0008242">
    <property type="term" value="F:omega peptidase activity"/>
    <property type="evidence" value="ECO:0000314"/>
    <property type="project" value="UniProtKB"/>
</dbReference>
<dbReference type="GO" id="GO:0043022">
    <property type="term" value="F:ribosome binding"/>
    <property type="evidence" value="ECO:0007669"/>
    <property type="project" value="Ensembl"/>
</dbReference>
<dbReference type="GO" id="GO:0030547">
    <property type="term" value="F:signaling receptor inhibitor activity"/>
    <property type="evidence" value="ECO:0000314"/>
    <property type="project" value="BHF-UCL"/>
</dbReference>
<dbReference type="GO" id="GO:0043130">
    <property type="term" value="F:ubiquitin binding"/>
    <property type="evidence" value="ECO:0000314"/>
    <property type="project" value="UniProtKB"/>
</dbReference>
<dbReference type="GO" id="GO:0031625">
    <property type="term" value="F:ubiquitin protein ligase binding"/>
    <property type="evidence" value="ECO:0000353"/>
    <property type="project" value="ParkinsonsUK-UCL"/>
</dbReference>
<dbReference type="GO" id="GO:0007628">
    <property type="term" value="P:adult walking behavior"/>
    <property type="evidence" value="ECO:0007669"/>
    <property type="project" value="Ensembl"/>
</dbReference>
<dbReference type="GO" id="GO:0007412">
    <property type="term" value="P:axon target recognition"/>
    <property type="evidence" value="ECO:0007669"/>
    <property type="project" value="Ensembl"/>
</dbReference>
<dbReference type="GO" id="GO:0019896">
    <property type="term" value="P:axonal transport of mitochondrion"/>
    <property type="evidence" value="ECO:0007669"/>
    <property type="project" value="Ensembl"/>
</dbReference>
<dbReference type="GO" id="GO:0071466">
    <property type="term" value="P:cellular response to xenobiotic stimulus"/>
    <property type="evidence" value="ECO:0007669"/>
    <property type="project" value="Ensembl"/>
</dbReference>
<dbReference type="GO" id="GO:0042755">
    <property type="term" value="P:eating behavior"/>
    <property type="evidence" value="ECO:0007669"/>
    <property type="project" value="Ensembl"/>
</dbReference>
<dbReference type="GO" id="GO:0002176">
    <property type="term" value="P:male germ cell proliferation"/>
    <property type="evidence" value="ECO:0007669"/>
    <property type="project" value="Ensembl"/>
</dbReference>
<dbReference type="GO" id="GO:0055001">
    <property type="term" value="P:muscle cell development"/>
    <property type="evidence" value="ECO:0007669"/>
    <property type="project" value="Ensembl"/>
</dbReference>
<dbReference type="GO" id="GO:0043409">
    <property type="term" value="P:negative regulation of MAPK cascade"/>
    <property type="evidence" value="ECO:0000314"/>
    <property type="project" value="BHF-UCL"/>
</dbReference>
<dbReference type="GO" id="GO:0050905">
    <property type="term" value="P:neuromuscular process"/>
    <property type="evidence" value="ECO:0007669"/>
    <property type="project" value="Ensembl"/>
</dbReference>
<dbReference type="GO" id="GO:0045821">
    <property type="term" value="P:positive regulation of glycolytic process"/>
    <property type="evidence" value="ECO:0000315"/>
    <property type="project" value="FlyBase"/>
</dbReference>
<dbReference type="GO" id="GO:0043161">
    <property type="term" value="P:proteasome-mediated ubiquitin-dependent protein catabolic process"/>
    <property type="evidence" value="ECO:0000303"/>
    <property type="project" value="ParkinsonsUK-UCL"/>
</dbReference>
<dbReference type="GO" id="GO:0030163">
    <property type="term" value="P:protein catabolic process"/>
    <property type="evidence" value="ECO:0000318"/>
    <property type="project" value="GO_Central"/>
</dbReference>
<dbReference type="GO" id="GO:0016579">
    <property type="term" value="P:protein deubiquitination"/>
    <property type="evidence" value="ECO:0000314"/>
    <property type="project" value="UniProtKB"/>
</dbReference>
<dbReference type="GO" id="GO:0016241">
    <property type="term" value="P:regulation of macroautophagy"/>
    <property type="evidence" value="ECO:0000304"/>
    <property type="project" value="ParkinsonsUK-UCL"/>
</dbReference>
<dbReference type="GO" id="GO:0002931">
    <property type="term" value="P:response to ischemia"/>
    <property type="evidence" value="ECO:0007669"/>
    <property type="project" value="Ensembl"/>
</dbReference>
<dbReference type="CDD" id="cd09616">
    <property type="entry name" value="Peptidase_C12_UCH_L1_L3"/>
    <property type="match status" value="1"/>
</dbReference>
<dbReference type="FunFam" id="3.40.532.10:FF:000004">
    <property type="entry name" value="Ubiquitin carboxyl-terminal hydrolase"/>
    <property type="match status" value="1"/>
</dbReference>
<dbReference type="Gene3D" id="3.40.532.10">
    <property type="entry name" value="Peptidase C12, ubiquitin carboxyl-terminal hydrolase"/>
    <property type="match status" value="1"/>
</dbReference>
<dbReference type="InterPro" id="IPR038765">
    <property type="entry name" value="Papain-like_cys_pep_sf"/>
</dbReference>
<dbReference type="InterPro" id="IPR001578">
    <property type="entry name" value="Peptidase_C12_UCH"/>
</dbReference>
<dbReference type="InterPro" id="IPR036959">
    <property type="entry name" value="Peptidase_C12_UCH_sf"/>
</dbReference>
<dbReference type="InterPro" id="IPR057254">
    <property type="entry name" value="UCH_AS"/>
</dbReference>
<dbReference type="PANTHER" id="PTHR10589">
    <property type="entry name" value="UBIQUITIN CARBOXYL-TERMINAL HYDROLASE"/>
    <property type="match status" value="1"/>
</dbReference>
<dbReference type="PANTHER" id="PTHR10589:SF19">
    <property type="entry name" value="UBIQUITIN CARBOXYL-TERMINAL HYDROLASE ISOZYME L1"/>
    <property type="match status" value="1"/>
</dbReference>
<dbReference type="Pfam" id="PF01088">
    <property type="entry name" value="Peptidase_C12"/>
    <property type="match status" value="1"/>
</dbReference>
<dbReference type="PRINTS" id="PR00707">
    <property type="entry name" value="UBCTHYDRLASE"/>
</dbReference>
<dbReference type="SUPFAM" id="SSF54001">
    <property type="entry name" value="Cysteine proteinases"/>
    <property type="match status" value="1"/>
</dbReference>
<dbReference type="PROSITE" id="PS00140">
    <property type="entry name" value="UCH_1"/>
    <property type="match status" value="1"/>
</dbReference>
<dbReference type="PROSITE" id="PS52048">
    <property type="entry name" value="UCH_DOMAIN"/>
    <property type="match status" value="1"/>
</dbReference>
<feature type="chain" id="PRO_0000211055" description="Ubiquitin carboxyl-terminal hydrolase isozyme L1">
    <location>
        <begin position="1"/>
        <end position="220"/>
    </location>
</feature>
<feature type="propeptide" id="PRO_0000414311" description="Removed in mature form" evidence="29">
    <location>
        <begin position="221"/>
        <end position="223"/>
    </location>
</feature>
<feature type="domain" description="UCH catalytic" evidence="4">
    <location>
        <begin position="2"/>
        <end position="221"/>
    </location>
</feature>
<feature type="region of interest" description="Interaction with ubiquitin" evidence="18">
    <location>
        <begin position="5"/>
        <end position="10"/>
    </location>
</feature>
<feature type="region of interest" description="Interaction with ubiquitin" evidence="18">
    <location>
        <begin position="211"/>
        <end position="216"/>
    </location>
</feature>
<feature type="active site" description="Nucleophile" evidence="4 18">
    <location>
        <position position="90"/>
    </location>
</feature>
<feature type="active site" description="Proton donor" evidence="4 18">
    <location>
        <position position="161"/>
    </location>
</feature>
<feature type="site" description="Susceptible to oxidation" evidence="11">
    <location>
        <position position="1"/>
    </location>
</feature>
<feature type="site" description="Susceptible to oxidation" evidence="11">
    <location>
        <position position="6"/>
    </location>
</feature>
<feature type="site" description="Susceptible to oxidation" evidence="11">
    <location>
        <position position="12"/>
    </location>
</feature>
<feature type="site" description="Transition state stabilizer" evidence="4 26">
    <location>
        <position position="84"/>
    </location>
</feature>
<feature type="site" description="Susceptible to oxidation" evidence="11">
    <location>
        <position position="124"/>
    </location>
</feature>
<feature type="site" description="Important for enzyme activity" evidence="4">
    <location>
        <position position="176"/>
    </location>
</feature>
<feature type="site" description="Susceptible to oxidation" evidence="11">
    <location>
        <position position="179"/>
    </location>
</feature>
<feature type="site" description="Susceptible to oxidation" evidence="11">
    <location>
        <position position="220"/>
    </location>
</feature>
<feature type="modified residue" description="N-acetylmethionine" evidence="25">
    <location>
        <position position="1"/>
    </location>
</feature>
<feature type="modified residue" description="Phosphoserine" evidence="2">
    <location>
        <position position="125"/>
    </location>
</feature>
<feature type="lipid moiety-binding region" description="S-farnesyl cysteine" evidence="17">
    <location>
        <position position="220"/>
    </location>
</feature>
<feature type="splice variant" id="VSP_062523" description="In isoform 3." evidence="25">
    <location>
        <begin position="1"/>
        <end position="11"/>
    </location>
</feature>
<feature type="splice variant" id="VSP_062524" description="In isoform 2." evidence="25">
    <location>
        <begin position="1"/>
        <end position="5"/>
    </location>
</feature>
<feature type="sequence variant" id="VAR_087898" description="In SPG79A." evidence="24">
    <location>
        <begin position="2"/>
        <end position="223"/>
    </location>
</feature>
<feature type="sequence variant" id="VAR_070875" description="In SPG79B; has decreased binding to ubiquitin and significantly decreased hydrolase activity compared to wild-type; dbSNP:rs397515634." evidence="21">
    <original>E</original>
    <variation>A</variation>
    <location>
        <position position="7"/>
    </location>
</feature>
<feature type="sequence variant" id="VAR_015677" description="It confers protection from oxidative stress when expressed at physiological levels in neuroblastoma cells and primary cortical neurons; loss of dimerization ability; impaired ligase activity; dbSNP:rs5030732." evidence="5 7 9 10 12 13 16 19">
    <original>S</original>
    <variation>Y</variation>
    <location>
        <position position="18"/>
    </location>
</feature>
<feature type="sequence variant" id="VAR_087899" description="In SPG79A." evidence="24">
    <location>
        <begin position="25"/>
        <end position="223"/>
    </location>
</feature>
<feature type="sequence variant" id="VAR_087900" description="In SPG79A; uncertain significance." evidence="24">
    <original>L</original>
    <variation>LL</variation>
    <location>
        <position position="52"/>
    </location>
</feature>
<feature type="sequence variant" id="VAR_015678" description="In PARK5; impaired enzymatic hydrolase activity; has about a 50% reduction in catalytic activity compared to wild-type protein; dbSNP:rs121917767." evidence="6 9 10 21 27">
    <original>I</original>
    <variation>M</variation>
    <location>
        <position position="93"/>
    </location>
</feature>
<feature type="sequence variant" id="VAR_087901" description="In SPG79A." evidence="24">
    <location>
        <begin position="178"/>
        <end position="223"/>
    </location>
</feature>
<feature type="sequence variant" id="VAR_078119" description="In SPG79B; increased hydrolase activity; decreased protein abundance; dbSNP:rs768996179." evidence="23">
    <original>R</original>
    <variation>Q</variation>
    <location>
        <position position="178"/>
    </location>
</feature>
<feature type="sequence variant" id="VAR_087902" description="In SPG79A." evidence="24">
    <location>
        <begin position="211"/>
        <end position="223"/>
    </location>
</feature>
<feature type="sequence variant" id="VAR_078120" description="In SPG79B; decreased protein abundance; dbSNP:rs1057519600." evidence="23">
    <original>A</original>
    <variation>D</variation>
    <location>
        <position position="216"/>
    </location>
</feature>
<feature type="mutagenesis site" description="No effect on enzymatic parameters." evidence="26">
    <original>Q</original>
    <variation>R</variation>
    <location>
        <position position="73"/>
    </location>
</feature>
<feature type="mutagenesis site" description="Abolishes enzymatic activity." evidence="10 18 21 22 26">
    <original>C</original>
    <variation>S</variation>
    <location>
        <position position="90"/>
    </location>
</feature>
<feature type="mutagenesis site" description="2-fold increase in affinity for ubiquitin ethyl ester, slight reduction in enzymatic activity." evidence="26">
    <original>H</original>
    <variation>Q</variation>
    <variation>N</variation>
    <location>
        <position position="97"/>
    </location>
</feature>
<feature type="mutagenesis site" description="10000-fold decrease in enzymatic activity; no change in affinity for ubiquitin ethyl ester." evidence="26">
    <original>H</original>
    <variation>D</variation>
    <location>
        <position position="161"/>
    </location>
</feature>
<feature type="mutagenesis site" description="Abolishes enzymatic activity." evidence="26">
    <original>H</original>
    <variation>K</variation>
    <variation>Q</variation>
    <variation>N</variation>
    <variation>Y</variation>
    <location>
        <position position="161"/>
    </location>
</feature>
<feature type="mutagenesis site" description="6-fold decrease in affinity for ubiquitin ethyl ester; 97.5% decrease in enzymatic activity." evidence="26">
    <original>D</original>
    <variation>N</variation>
    <location>
        <position position="176"/>
    </location>
</feature>
<feature type="mutagenesis site" description="Almost complete loss of activity." evidence="18">
    <original>F</original>
    <variation>A</variation>
    <location>
        <position position="204"/>
    </location>
</feature>
<feature type="helix" evidence="33">
    <location>
        <begin position="10"/>
        <end position="19"/>
    </location>
</feature>
<feature type="strand" evidence="33">
    <location>
        <begin position="22"/>
        <end position="25"/>
    </location>
</feature>
<feature type="strand" evidence="33">
    <location>
        <begin position="27"/>
        <end position="31"/>
    </location>
</feature>
<feature type="helix" evidence="33">
    <location>
        <begin position="36"/>
        <end position="41"/>
    </location>
</feature>
<feature type="strand" evidence="33">
    <location>
        <begin position="46"/>
        <end position="54"/>
    </location>
</feature>
<feature type="helix" evidence="33">
    <location>
        <begin position="57"/>
        <end position="70"/>
    </location>
</feature>
<feature type="turn" evidence="33">
    <location>
        <begin position="71"/>
        <end position="74"/>
    </location>
</feature>
<feature type="strand" evidence="32">
    <location>
        <begin position="86"/>
        <end position="88"/>
    </location>
</feature>
<feature type="helix" evidence="33">
    <location>
        <begin position="90"/>
        <end position="100"/>
    </location>
</feature>
<feature type="turn" evidence="33">
    <location>
        <begin position="101"/>
        <end position="105"/>
    </location>
</feature>
<feature type="helix" evidence="33">
    <location>
        <begin position="113"/>
        <end position="120"/>
    </location>
</feature>
<feature type="turn" evidence="33">
    <location>
        <begin position="121"/>
        <end position="123"/>
    </location>
</feature>
<feature type="helix" evidence="33">
    <location>
        <begin position="126"/>
        <end position="135"/>
    </location>
</feature>
<feature type="helix" evidence="33">
    <location>
        <begin position="137"/>
        <end position="147"/>
    </location>
</feature>
<feature type="strand" evidence="33">
    <location>
        <begin position="160"/>
        <end position="168"/>
    </location>
</feature>
<feature type="strand" evidence="33">
    <location>
        <begin position="171"/>
        <end position="175"/>
    </location>
</feature>
<feature type="strand" evidence="33">
    <location>
        <begin position="179"/>
        <end position="181"/>
    </location>
</feature>
<feature type="strand" evidence="33">
    <location>
        <begin position="183"/>
        <end position="187"/>
    </location>
</feature>
<feature type="helix" evidence="33">
    <location>
        <begin position="190"/>
        <end position="192"/>
    </location>
</feature>
<feature type="helix" evidence="33">
    <location>
        <begin position="193"/>
        <end position="207"/>
    </location>
</feature>
<feature type="helix" evidence="32">
    <location>
        <begin position="211"/>
        <end position="213"/>
    </location>
</feature>
<feature type="strand" evidence="33">
    <location>
        <begin position="215"/>
        <end position="220"/>
    </location>
</feature>
<feature type="modified residue" description="N-acetylmethionine" evidence="25">
    <location sequence="P09936-2">
        <position position="1"/>
    </location>
</feature>
<feature type="modified residue" description="N-acetylmethionine" evidence="25">
    <location sequence="P09936-3">
        <position position="1"/>
    </location>
</feature>
<accession>P09936</accession>
<accession>Q4W5K6</accession>
<accession>Q71UM0</accession>
<comment type="function">
    <text evidence="3 9 20 21 22 26 27">Deubiquitinase that plays a role in the regulation of several processes such as maintenance of synaptic function, cardiac function, inflammatory response or osteoclastogenesis (PubMed:22212137, PubMed:23359680). Abrogates the ubiquitination of multiple proteins including WWTR1/TAZ, EGFR, HIF1A and beta-site amyloid precursor protein cleaving enzyme 1/BACE1 (PubMed:22212137, PubMed:25615526). In addition, recognizes and hydrolyzes a peptide bond at the C-terminal glycine of ubiquitin to maintain a stable pool of monoubiquitin that is a key requirement for the ubiquitin-proteasome and the autophagy-lysosome pathways (PubMed:12408865, PubMed:8639624, PubMed:9774100). Regulates amyloid precursor protein/APP processing by promoting BACE1 degradation resulting in decreased amyloid beta production (PubMed:22212137). Plays a role in the immune response by regulating the ability of MHC I molecules to reach cross-presentation compartments competent for generating Ag-MHC I complexes (By similarity). Mediates the 'Lys-48'-linked deubiquitination of the transcriptional coactivator WWTR1/TAZ leading to its stabilization and inhibition of osteoclastogenesis (By similarity). Deubiquitinates and stabilizes epidermal growth factor receptor EGFR to prevent its degradation and to activate its downstream mediators (By similarity). Modulates oxidative activity in skeletal muscle by regulating key mitochondrial oxidative proteins (By similarity). Enhances the activity of hypoxia-inducible factor 1-alpha/HIF1A by abrogateing its VHL E3 ligase-mediated ubiquitination and consequently inhibiting its degradation (PubMed:25615526).</text>
</comment>
<comment type="catalytic activity">
    <reaction evidence="9 10 14 18 21 22 26 27">
        <text>Thiol-dependent hydrolysis of ester, thioester, amide, peptide and isopeptide bonds formed by the C-terminal Gly of ubiquitin (a 76-residue protein attached to proteins as an intracellular targeting signal).</text>
        <dbReference type="EC" id="3.4.19.12"/>
    </reaction>
</comment>
<comment type="biophysicochemical properties">
    <kinetics>
        <KM evidence="10 26 27">122 nM for Ub-AMC</KM>
        <KM evidence="10 26 27">1.2 uM for ubiquitin ethyl ester</KM>
        <Vmax evidence="10 26 27">0.47 umol/min/mg enzyme toward Ub-AMC</Vmax>
        <Vmax evidence="10 26 27">25.0 umol/min/mg enzyme toward ubiquitin ethyl ester</Vmax>
    </kinetics>
</comment>
<comment type="subunit">
    <text evidence="1 8 15 18">Monomer. Homodimer. Interacts with SNCA (By similarity). Interacts with COPS5.</text>
</comment>
<comment type="interaction">
    <interactant intactId="EBI-714860">
        <id>P09936</id>
    </interactant>
    <interactant intactId="EBI-11529439">
        <id>P63010-2</id>
        <label>AP2B1</label>
    </interactant>
    <organismsDiffer>false</organismsDiffer>
    <experiments>3</experiments>
</comment>
<comment type="interaction">
    <interactant intactId="EBI-714860">
        <id>P09936</id>
    </interactant>
    <interactant intactId="EBI-77613">
        <id>P05067</id>
        <label>APP</label>
    </interactant>
    <organismsDiffer>false</organismsDiffer>
    <experiments>5</experiments>
</comment>
<comment type="interaction">
    <interactant intactId="EBI-714860">
        <id>P09936</id>
    </interactant>
    <interactant intactId="EBI-17264467">
        <id>P05067-2</id>
        <label>APP</label>
    </interactant>
    <organismsDiffer>false</organismsDiffer>
    <experiments>3</experiments>
</comment>
<comment type="interaction">
    <interactant intactId="EBI-714860">
        <id>P09936</id>
    </interactant>
    <interactant intactId="EBI-10694449">
        <id>Q8N6T3-3</id>
        <label>ARFGAP1</label>
    </interactant>
    <organismsDiffer>false</organismsDiffer>
    <experiments>3</experiments>
</comment>
<comment type="interaction">
    <interactant intactId="EBI-714860">
        <id>P09936</id>
    </interactant>
    <interactant intactId="EBI-712767">
        <id>P18847</id>
        <label>ATF3</label>
    </interactant>
    <organismsDiffer>false</organismsDiffer>
    <experiments>3</experiments>
</comment>
<comment type="interaction">
    <interactant intactId="EBI-714860">
        <id>P09936</id>
    </interactant>
    <interactant intactId="EBI-1047414">
        <id>Q9H1Y0</id>
        <label>ATG5</label>
    </interactant>
    <organismsDiffer>false</organismsDiffer>
    <experiments>3</experiments>
</comment>
<comment type="interaction">
    <interactant intactId="EBI-714860">
        <id>P09936</id>
    </interactant>
    <interactant intactId="EBI-518823">
        <id>O15392</id>
        <label>BIRC5</label>
    </interactant>
    <organismsDiffer>false</organismsDiffer>
    <experiments>3</experiments>
</comment>
<comment type="interaction">
    <interactant intactId="EBI-714860">
        <id>P09936</id>
    </interactant>
    <interactant intactId="EBI-2837444">
        <id>Q8WUW1</id>
        <label>BRK1</label>
    </interactant>
    <organismsDiffer>false</organismsDiffer>
    <experiments>3</experiments>
</comment>
<comment type="interaction">
    <interactant intactId="EBI-714860">
        <id>P09936</id>
    </interactant>
    <interactant intactId="EBI-78129">
        <id>P83916</id>
        <label>CBX1</label>
    </interactant>
    <organismsDiffer>false</organismsDiffer>
    <experiments>4</experiments>
</comment>
<comment type="interaction">
    <interactant intactId="EBI-714860">
        <id>P09936</id>
    </interactant>
    <interactant intactId="EBI-295644">
        <id>P11802</id>
        <label>CDK4</label>
    </interactant>
    <organismsDiffer>false</organismsDiffer>
    <experiments>4</experiments>
</comment>
<comment type="interaction">
    <interactant intactId="EBI-714860">
        <id>P09936</id>
    </interactant>
    <interactant intactId="EBI-1041567">
        <id>Q00535</id>
        <label>CDK5</label>
    </interactant>
    <organismsDiffer>false</organismsDiffer>
    <experiments>2</experiments>
</comment>
<comment type="interaction">
    <interactant intactId="EBI-714860">
        <id>P09936</id>
    </interactant>
    <interactant intactId="EBI-350590">
        <id>Q9UNS2</id>
        <label>COPS3</label>
    </interactant>
    <organismsDiffer>false</organismsDiffer>
    <experiments>3</experiments>
</comment>
<comment type="interaction">
    <interactant intactId="EBI-714860">
        <id>P09936</id>
    </interactant>
    <interactant intactId="EBI-594661">
        <id>Q92905</id>
        <label>COPS5</label>
    </interactant>
    <organismsDiffer>false</organismsDiffer>
    <experiments>3</experiments>
</comment>
<comment type="interaction">
    <interactant intactId="EBI-714860">
        <id>P09936</id>
    </interactant>
    <interactant intactId="EBI-297353">
        <id>P00533</id>
        <label>EGFR</label>
    </interactant>
    <organismsDiffer>false</organismsDiffer>
    <experiments>3</experiments>
</comment>
<comment type="interaction">
    <interactant intactId="EBI-714860">
        <id>P09936</id>
    </interactant>
    <interactant intactId="EBI-1043343">
        <id>O60739</id>
        <label>EIF1B</label>
    </interactant>
    <organismsDiffer>false</organismsDiffer>
    <experiments>3</experiments>
</comment>
<comment type="interaction">
    <interactant intactId="EBI-714860">
        <id>P09936</id>
    </interactant>
    <interactant intactId="EBI-9246952">
        <id>Q8TC29</id>
        <label>ENKUR</label>
    </interactant>
    <organismsDiffer>false</organismsDiffer>
    <experiments>3</experiments>
</comment>
<comment type="interaction">
    <interactant intactId="EBI-714860">
        <id>P09936</id>
    </interactant>
    <interactant intactId="EBI-6448852">
        <id>Q9UI08-2</id>
        <label>EVL</label>
    </interactant>
    <organismsDiffer>false</organismsDiffer>
    <experiments>3</experiments>
</comment>
<comment type="interaction">
    <interactant intactId="EBI-714860">
        <id>P09936</id>
    </interactant>
    <interactant intactId="EBI-25845242">
        <id>Q8WVV9-3</id>
        <label>HNRNPLL</label>
    </interactant>
    <organismsDiffer>false</organismsDiffer>
    <experiments>3</experiments>
</comment>
<comment type="interaction">
    <interactant intactId="EBI-714860">
        <id>P09936</id>
    </interactant>
    <interactant intactId="EBI-307369">
        <id>Q14164</id>
        <label>IKBKE</label>
    </interactant>
    <organismsDiffer>false</organismsDiffer>
    <experiments>3</experiments>
</comment>
<comment type="interaction">
    <interactant intactId="EBI-714860">
        <id>P09936</id>
    </interactant>
    <interactant intactId="EBI-21911304">
        <id>Q6DN90-2</id>
        <label>IQSEC1</label>
    </interactant>
    <organismsDiffer>false</organismsDiffer>
    <experiments>3</experiments>
</comment>
<comment type="interaction">
    <interactant intactId="EBI-714860">
        <id>P09936</id>
    </interactant>
    <interactant intactId="EBI-11985629">
        <id>Q96JM7-2</id>
        <label>L3MBTL3</label>
    </interactant>
    <organismsDiffer>false</organismsDiffer>
    <experiments>3</experiments>
</comment>
<comment type="interaction">
    <interactant intactId="EBI-714860">
        <id>P09936</id>
    </interactant>
    <interactant intactId="EBI-21591415">
        <id>P13473-2</id>
        <label>LAMP2</label>
    </interactant>
    <organismsDiffer>false</organismsDiffer>
    <experiments>3</experiments>
</comment>
<comment type="interaction">
    <interactant intactId="EBI-714860">
        <id>P09936</id>
    </interactant>
    <interactant intactId="EBI-1108377">
        <id>Q9BYZ2</id>
        <label>LDHAL6B</label>
    </interactant>
    <organismsDiffer>false</organismsDiffer>
    <experiments>3</experiments>
</comment>
<comment type="interaction">
    <interactant intactId="EBI-714860">
        <id>P09936</id>
    </interactant>
    <interactant intactId="EBI-347779">
        <id>O95777</id>
        <label>LSM8</label>
    </interactant>
    <organismsDiffer>false</organismsDiffer>
    <experiments>3</experiments>
</comment>
<comment type="interaction">
    <interactant intactId="EBI-714860">
        <id>P09936</id>
    </interactant>
    <interactant intactId="EBI-21250407">
        <id>A4FUJ8</id>
        <label>MKL1</label>
    </interactant>
    <organismsDiffer>false</organismsDiffer>
    <experiments>3</experiments>
</comment>
<comment type="interaction">
    <interactant intactId="EBI-714860">
        <id>P09936</id>
    </interactant>
    <interactant intactId="EBI-716247">
        <id>Q15843</id>
        <label>NEDD8</label>
    </interactant>
    <organismsDiffer>false</organismsDiffer>
    <experiments>4</experiments>
</comment>
<comment type="interaction">
    <interactant intactId="EBI-714860">
        <id>P09936</id>
    </interactant>
    <interactant intactId="EBI-18577082">
        <id>O15381-5</id>
        <label>NVL</label>
    </interactant>
    <organismsDiffer>false</organismsDiffer>
    <experiments>3</experiments>
</comment>
<comment type="interaction">
    <interactant intactId="EBI-714860">
        <id>P09936</id>
    </interactant>
    <interactant intactId="EBI-22012354">
        <id>Q9BR81</id>
        <label>PCDHGC3</label>
    </interactant>
    <organismsDiffer>false</organismsDiffer>
    <experiments>3</experiments>
</comment>
<comment type="interaction">
    <interactant intactId="EBI-714860">
        <id>P09936</id>
    </interactant>
    <interactant intactId="EBI-716063">
        <id>Q13113</id>
        <label>PDZK1IP1</label>
    </interactant>
    <organismsDiffer>false</organismsDiffer>
    <experiments>3</experiments>
</comment>
<comment type="interaction">
    <interactant intactId="EBI-714860">
        <id>P09936</id>
    </interactant>
    <interactant intactId="EBI-286642">
        <id>P62826</id>
        <label>RAN</label>
    </interactant>
    <organismsDiffer>false</organismsDiffer>
    <experiments>3</experiments>
</comment>
<comment type="interaction">
    <interactant intactId="EBI-714860">
        <id>P09936</id>
    </interactant>
    <interactant intactId="EBI-746555">
        <id>Q8TAI7</id>
        <label>RHEBL1</label>
    </interactant>
    <organismsDiffer>false</organismsDiffer>
    <experiments>3</experiments>
</comment>
<comment type="interaction">
    <interactant intactId="EBI-714860">
        <id>P09936</id>
    </interactant>
    <interactant intactId="EBI-25829984">
        <id>Q9ULX5</id>
        <label>RNF112</label>
    </interactant>
    <organismsDiffer>false</organismsDiffer>
    <experiments>3</experiments>
</comment>
<comment type="interaction">
    <interactant intactId="EBI-714860">
        <id>P09936</id>
    </interactant>
    <interactant intactId="EBI-25840535">
        <id>Q15554-4</id>
        <label>TERF2</label>
    </interactant>
    <organismsDiffer>false</organismsDiffer>
    <experiments>3</experiments>
</comment>
<comment type="interaction">
    <interactant intactId="EBI-714860">
        <id>P09936</id>
    </interactant>
    <interactant intactId="EBI-750109">
        <id>Q9NYB0</id>
        <label>TERF2IP</label>
    </interactant>
    <organismsDiffer>false</organismsDiffer>
    <experiments>2</experiments>
</comment>
<comment type="interaction">
    <interactant intactId="EBI-714860">
        <id>P09936</id>
    </interactant>
    <interactant intactId="EBI-366083">
        <id>P04637</id>
        <label>TP53</label>
    </interactant>
    <organismsDiffer>false</organismsDiffer>
    <experiments>3</experiments>
</comment>
<comment type="interaction">
    <interactant intactId="EBI-714860">
        <id>P09936</id>
    </interactant>
    <interactant intactId="EBI-359276">
        <id>Q9Y4K3</id>
        <label>TRAF6</label>
    </interactant>
    <organismsDiffer>false</organismsDiffer>
    <experiments>3</experiments>
</comment>
<comment type="interaction">
    <interactant intactId="EBI-714860">
        <id>P09936</id>
    </interactant>
    <interactant intactId="EBI-81290">
        <id>P19474</id>
        <label>TRIM21</label>
    </interactant>
    <organismsDiffer>false</organismsDiffer>
    <experiments>3</experiments>
</comment>
<comment type="interaction">
    <interactant intactId="EBI-714860">
        <id>P09936</id>
    </interactant>
    <interactant intactId="EBI-749370">
        <id>Q9BSL1</id>
        <label>UBAC1</label>
    </interactant>
    <organismsDiffer>false</organismsDiffer>
    <experiments>3</experiments>
</comment>
<comment type="interaction">
    <interactant intactId="EBI-714860">
        <id>P09936</id>
    </interactant>
    <interactant intactId="EBI-10180829">
        <id>Q7KZS0</id>
        <label>UBE2I</label>
    </interactant>
    <organismsDiffer>false</organismsDiffer>
    <experiments>3</experiments>
</comment>
<comment type="interaction">
    <interactant intactId="EBI-714860">
        <id>P09936</id>
    </interactant>
    <interactant intactId="EBI-473850">
        <id>P61086</id>
        <label>UBE2K</label>
    </interactant>
    <organismsDiffer>false</organismsDiffer>
    <experiments>3</experiments>
</comment>
<comment type="interaction">
    <interactant intactId="EBI-714860">
        <id>P09936</id>
    </interactant>
    <interactant intactId="EBI-373242">
        <id>Q9UK80</id>
        <label>USP21</label>
    </interactant>
    <organismsDiffer>false</organismsDiffer>
    <experiments>4</experiments>
</comment>
<comment type="interaction">
    <interactant intactId="EBI-714860">
        <id>P09936</id>
    </interactant>
    <interactant intactId="EBI-25894765">
        <id>Q86WB0-2</id>
        <label>ZC3HC1</label>
    </interactant>
    <organismsDiffer>false</organismsDiffer>
    <experiments>3</experiments>
</comment>
<comment type="subcellular location">
    <subcellularLocation>
        <location evidence="17">Cytoplasm</location>
    </subcellularLocation>
    <subcellularLocation>
        <location evidence="17">Endoplasmic reticulum membrane</location>
        <topology evidence="17">Lipid-anchor</topology>
    </subcellularLocation>
    <text evidence="3">About 30% of total UCHL1 is associated with membranes in brain. Localizes near and/or within mitochondria to potentially interact with mitochondrial proteins.</text>
</comment>
<comment type="alternative products">
    <event type="alternative initiation"/>
    <isoform>
        <id>P09936-1</id>
        <name>1</name>
        <sequence type="displayed"/>
    </isoform>
    <isoform>
        <id>P09936-2</id>
        <name>2</name>
        <sequence type="described" ref="VSP_062524"/>
    </isoform>
    <isoform>
        <id>P09936-3</id>
        <name>3</name>
        <sequence type="described" ref="VSP_062523"/>
    </isoform>
</comment>
<comment type="tissue specificity">
    <text evidence="11 28">Found in neuronal cell bodies and processes throughout the neocortex (at protein level). Expressed in neurons and cells of the diffuse neuroendocrine system and their tumors. Weakly expressed in ovary. Down-regulated in brains from Parkinson disease and Alzheimer disease patients.</text>
</comment>
<comment type="PTM">
    <text evidence="1">O-glycosylated.</text>
</comment>
<comment type="disease" evidence="9 10 27">
    <disease id="DI-02947">
        <name>Parkinson disease 5</name>
        <acronym>PARK5</acronym>
        <description>A complex neurodegenerative disorder with manifestations ranging from typical Parkinson disease to dementia with Lewy bodies. Clinical features include parkinsonian symptoms (resting tremor, rigidity, postural instability and bradykinesia), dementia, diffuse Lewy body pathology, autonomic dysfunction, hallucinations and paranoia.</description>
        <dbReference type="MIM" id="613643"/>
    </disease>
    <text>Disease susceptibility is associated with variants affecting the gene represented in this entry.</text>
</comment>
<comment type="disease" evidence="24">
    <disease id="DI-06574">
        <name>Spastic paraplegia 79A, autosomal dominant, with ataxia</name>
        <acronym>SPG79A</acronym>
        <description>A form of spastic paraplegia, a neurodegenerative disorder characterized by a slow, gradual, progressive weakness and spasticity of the lower limbs. Rate of progression and the severity of symptoms are quite variable. Initial symptoms may include difficulty with balance, weakness and stiffness in the legs, muscle spasms, and dragging the toes when walking. In some forms of the disorder, bladder symptoms (such as incontinence) may appear, or the weakness and stiffness may spread to other parts of the body. SPG79A is a slowly progressive form characterized by late-onset spastic ataxia, neuropathy, and often optic atrophy.</description>
        <dbReference type="MIM" id="620221"/>
    </disease>
    <text>The disease is caused by variants affecting the gene represented in this entry.</text>
</comment>
<comment type="disease" evidence="21 23">
    <disease id="DI-03925">
        <name>Spastic paraplegia 79B, autosomal recessive</name>
        <acronym>SPG79B</acronym>
        <description>A form of spastic paraplegia, a neurodegenerative disorder characterized by a slow, gradual, progressive weakness and spasticity of the lower limbs. Rate of progression and the severity of symptoms are quite variable. Initial symptoms may include difficulty with balance, weakness and stiffness in the legs, muscle spasms, and dragging the toes when walking. In some forms of the disorder, bladder symptoms (such as incontinence) may appear, or the weakness and stiffness may spread to other parts of the body. SPG79B is characterized by childhood onset blindness, cerebellar ataxia, nystagmus, dorsal column dysfunction, and spasticity with upper motor neuron dysfunction.</description>
        <dbReference type="MIM" id="615491"/>
    </disease>
    <text>The disease is caused by variants affecting the gene represented in this entry.</text>
</comment>
<comment type="miscellaneous">
    <text>Oxidation of Met-1, Met-6, Met-12, Met-124 and Met-179 to methionine sulfoxide, and oxidation of Cys-220 to cysteine sulfonic acid have been observed in brains from Alzheimer disease (AD) and Parkinson disease (PD) patients. In AD, UCHL1 was found to be associated with neurofibrillary tangles. In contrast to UCHL3, does not hydrolyze a peptide bond at the C-terminal glycine of NEDD8.</text>
</comment>
<comment type="similarity">
    <text evidence="29">Belongs to the peptidase C12 family.</text>
</comment>
<comment type="caution">
    <text evidence="29">PubMed:9774100 reports the association of mutation Ile93Met with Parkinson disease. However, according to PubMed:16450370 this association is uncertain and UCHL1 is not a susceptibility gene for Parkinson disease.</text>
</comment>
<comment type="caution">
    <text evidence="31">The oxidation forms of Met-1, Met-6, Met-12, Met-124, Met-179 and Cys-220 are subject of controversy and could be the artifactual results of sample handling.</text>
</comment>
<comment type="caution">
    <text evidence="21 30">The homodimer may have ATP-independent ubiquitin ligase activity (PubMed:12408865). However, in another study, UCHL1 was shown to lack ubiquitin ligase activity (PubMed:23359680).</text>
</comment>
<comment type="sequence caution" evidence="29">
    <conflict type="erroneous initiation">
        <sequence resource="EMBL-CDS" id="CAA28443"/>
    </conflict>
    <text>Truncated N-terminus.</text>
</comment>
<comment type="online information" name="Wikipedia">
    <link uri="https://en.wikipedia.org/wiki/Ubiquitin_carboxy-terminal_hydrolase_L1"/>
    <text>Ubiquitin carboxy-terminal hydrolase L1 entry</text>
</comment>
<gene>
    <name type="primary">UCHL1</name>
</gene>
<keyword id="KW-0002">3D-structure</keyword>
<keyword id="KW-0007">Acetylation</keyword>
<keyword id="KW-0024">Alternative initiation</keyword>
<keyword id="KW-0963">Cytoplasm</keyword>
<keyword id="KW-0903">Direct protein sequencing</keyword>
<keyword id="KW-0225">Disease variant</keyword>
<keyword id="KW-0256">Endoplasmic reticulum</keyword>
<keyword id="KW-0325">Glycoprotein</keyword>
<keyword id="KW-0890">Hereditary spastic paraplegia</keyword>
<keyword id="KW-0378">Hydrolase</keyword>
<keyword id="KW-0449">Lipoprotein</keyword>
<keyword id="KW-0472">Membrane</keyword>
<keyword id="KW-0523">Neurodegeneration</keyword>
<keyword id="KW-0558">Oxidation</keyword>
<keyword id="KW-0907">Parkinson disease</keyword>
<keyword id="KW-0908">Parkinsonism</keyword>
<keyword id="KW-0597">Phosphoprotein</keyword>
<keyword id="KW-0636">Prenylation</keyword>
<keyword id="KW-0645">Protease</keyword>
<keyword id="KW-1267">Proteomics identification</keyword>
<keyword id="KW-1185">Reference proteome</keyword>
<keyword id="KW-0788">Thiol protease</keyword>
<keyword id="KW-0833">Ubl conjugation pathway</keyword>
<protein>
    <recommendedName>
        <fullName>Ubiquitin carboxyl-terminal hydrolase isozyme L1</fullName>
        <shortName>UCH-L1</shortName>
        <ecNumber evidence="9 10 14 18 21 26 27">3.4.19.12</ecNumber>
    </recommendedName>
    <alternativeName>
        <fullName>Neuron cytoplasmic protein 9.5</fullName>
    </alternativeName>
    <alternativeName>
        <fullName>PGP 9.5</fullName>
        <shortName>PGP9.5</shortName>
    </alternativeName>
    <alternativeName>
        <fullName>Ubiquitin thioesterase L1</fullName>
    </alternativeName>
</protein>
<proteinExistence type="evidence at protein level"/>